<evidence type="ECO:0000255" key="1">
    <source>
        <dbReference type="HAMAP-Rule" id="MF_00321"/>
    </source>
</evidence>
<evidence type="ECO:0000305" key="2"/>
<name>ENGB_VIBVU</name>
<gene>
    <name evidence="1" type="primary">engB</name>
    <name type="ordered locus">VV1_0900</name>
</gene>
<comment type="function">
    <text evidence="1">Necessary for normal cell division and for the maintenance of normal septation.</text>
</comment>
<comment type="cofactor">
    <cofactor evidence="1">
        <name>Mg(2+)</name>
        <dbReference type="ChEBI" id="CHEBI:18420"/>
    </cofactor>
</comment>
<comment type="similarity">
    <text evidence="1">Belongs to the TRAFAC class TrmE-Era-EngA-EngB-Septin-like GTPase superfamily. EngB GTPase family.</text>
</comment>
<comment type="sequence caution" evidence="2">
    <conflict type="erroneous initiation">
        <sequence resource="EMBL-CDS" id="AAO09402"/>
    </conflict>
</comment>
<accession>Q8DDQ8</accession>
<reference key="1">
    <citation type="submission" date="2002-12" db="EMBL/GenBank/DDBJ databases">
        <title>Complete genome sequence of Vibrio vulnificus CMCP6.</title>
        <authorList>
            <person name="Rhee J.H."/>
            <person name="Kim S.Y."/>
            <person name="Chung S.S."/>
            <person name="Kim J.J."/>
            <person name="Moon Y.H."/>
            <person name="Jeong H."/>
            <person name="Choy H.E."/>
        </authorList>
    </citation>
    <scope>NUCLEOTIDE SEQUENCE [LARGE SCALE GENOMIC DNA]</scope>
    <source>
        <strain>CMCP6</strain>
    </source>
</reference>
<protein>
    <recommendedName>
        <fullName evidence="1">Probable GTP-binding protein EngB</fullName>
    </recommendedName>
</protein>
<proteinExistence type="inferred from homology"/>
<feature type="chain" id="PRO_0000157799" description="Probable GTP-binding protein EngB">
    <location>
        <begin position="1"/>
        <end position="216"/>
    </location>
</feature>
<feature type="domain" description="EngB-type G" evidence="1">
    <location>
        <begin position="26"/>
        <end position="200"/>
    </location>
</feature>
<feature type="binding site" evidence="1">
    <location>
        <begin position="34"/>
        <end position="41"/>
    </location>
    <ligand>
        <name>GTP</name>
        <dbReference type="ChEBI" id="CHEBI:37565"/>
    </ligand>
</feature>
<feature type="binding site" evidence="1">
    <location>
        <position position="41"/>
    </location>
    <ligand>
        <name>Mg(2+)</name>
        <dbReference type="ChEBI" id="CHEBI:18420"/>
    </ligand>
</feature>
<feature type="binding site" evidence="1">
    <location>
        <begin position="61"/>
        <end position="65"/>
    </location>
    <ligand>
        <name>GTP</name>
        <dbReference type="ChEBI" id="CHEBI:37565"/>
    </ligand>
</feature>
<feature type="binding site" evidence="1">
    <location>
        <position position="63"/>
    </location>
    <ligand>
        <name>Mg(2+)</name>
        <dbReference type="ChEBI" id="CHEBI:18420"/>
    </ligand>
</feature>
<feature type="binding site" evidence="1">
    <location>
        <begin position="79"/>
        <end position="82"/>
    </location>
    <ligand>
        <name>GTP</name>
        <dbReference type="ChEBI" id="CHEBI:37565"/>
    </ligand>
</feature>
<feature type="binding site" evidence="1">
    <location>
        <begin position="146"/>
        <end position="149"/>
    </location>
    <ligand>
        <name>GTP</name>
        <dbReference type="ChEBI" id="CHEBI:37565"/>
    </ligand>
</feature>
<feature type="binding site" evidence="1">
    <location>
        <begin position="179"/>
        <end position="181"/>
    </location>
    <ligand>
        <name>GTP</name>
        <dbReference type="ChEBI" id="CHEBI:37565"/>
    </ligand>
</feature>
<organism>
    <name type="scientific">Vibrio vulnificus (strain CMCP6)</name>
    <dbReference type="NCBI Taxonomy" id="216895"/>
    <lineage>
        <taxon>Bacteria</taxon>
        <taxon>Pseudomonadati</taxon>
        <taxon>Pseudomonadota</taxon>
        <taxon>Gammaproteobacteria</taxon>
        <taxon>Vibrionales</taxon>
        <taxon>Vibrionaceae</taxon>
        <taxon>Vibrio</taxon>
    </lineage>
</organism>
<dbReference type="EMBL" id="AE016795">
    <property type="protein sequence ID" value="AAO09402.1"/>
    <property type="status" value="ALT_INIT"/>
    <property type="molecule type" value="Genomic_DNA"/>
</dbReference>
<dbReference type="RefSeq" id="WP_013572586.1">
    <property type="nucleotide sequence ID" value="NC_004459.3"/>
</dbReference>
<dbReference type="SMR" id="Q8DDQ8"/>
<dbReference type="KEGG" id="vvu:VV1_0900"/>
<dbReference type="HOGENOM" id="CLU_033732_1_2_6"/>
<dbReference type="Proteomes" id="UP000002275">
    <property type="component" value="Chromosome 1"/>
</dbReference>
<dbReference type="GO" id="GO:0005829">
    <property type="term" value="C:cytosol"/>
    <property type="evidence" value="ECO:0007669"/>
    <property type="project" value="TreeGrafter"/>
</dbReference>
<dbReference type="GO" id="GO:0005525">
    <property type="term" value="F:GTP binding"/>
    <property type="evidence" value="ECO:0007669"/>
    <property type="project" value="UniProtKB-UniRule"/>
</dbReference>
<dbReference type="GO" id="GO:0046872">
    <property type="term" value="F:metal ion binding"/>
    <property type="evidence" value="ECO:0007669"/>
    <property type="project" value="UniProtKB-KW"/>
</dbReference>
<dbReference type="GO" id="GO:0000917">
    <property type="term" value="P:division septum assembly"/>
    <property type="evidence" value="ECO:0007669"/>
    <property type="project" value="UniProtKB-KW"/>
</dbReference>
<dbReference type="CDD" id="cd01876">
    <property type="entry name" value="YihA_EngB"/>
    <property type="match status" value="1"/>
</dbReference>
<dbReference type="FunFam" id="3.40.50.300:FF:000098">
    <property type="entry name" value="Probable GTP-binding protein EngB"/>
    <property type="match status" value="1"/>
</dbReference>
<dbReference type="Gene3D" id="3.40.50.300">
    <property type="entry name" value="P-loop containing nucleotide triphosphate hydrolases"/>
    <property type="match status" value="1"/>
</dbReference>
<dbReference type="HAMAP" id="MF_00321">
    <property type="entry name" value="GTPase_EngB"/>
    <property type="match status" value="1"/>
</dbReference>
<dbReference type="InterPro" id="IPR030393">
    <property type="entry name" value="G_ENGB_dom"/>
</dbReference>
<dbReference type="InterPro" id="IPR006073">
    <property type="entry name" value="GTP-bd"/>
</dbReference>
<dbReference type="InterPro" id="IPR019987">
    <property type="entry name" value="GTP-bd_ribosome_bio_YsxC"/>
</dbReference>
<dbReference type="InterPro" id="IPR027417">
    <property type="entry name" value="P-loop_NTPase"/>
</dbReference>
<dbReference type="NCBIfam" id="TIGR03598">
    <property type="entry name" value="GTPase_YsxC"/>
    <property type="match status" value="1"/>
</dbReference>
<dbReference type="PANTHER" id="PTHR11649:SF13">
    <property type="entry name" value="ENGB-TYPE G DOMAIN-CONTAINING PROTEIN"/>
    <property type="match status" value="1"/>
</dbReference>
<dbReference type="PANTHER" id="PTHR11649">
    <property type="entry name" value="MSS1/TRME-RELATED GTP-BINDING PROTEIN"/>
    <property type="match status" value="1"/>
</dbReference>
<dbReference type="Pfam" id="PF01926">
    <property type="entry name" value="MMR_HSR1"/>
    <property type="match status" value="1"/>
</dbReference>
<dbReference type="SUPFAM" id="SSF52540">
    <property type="entry name" value="P-loop containing nucleoside triphosphate hydrolases"/>
    <property type="match status" value="1"/>
</dbReference>
<dbReference type="PROSITE" id="PS51706">
    <property type="entry name" value="G_ENGB"/>
    <property type="match status" value="1"/>
</dbReference>
<sequence length="216" mass="24096">MSVKIHYQNTHFITSAPDIRHLPADEGIEIAFAGRSNAGKSSALNRLTNQKNLAKTSKTPGRTQLINLFKVTEGCHIVDLPGYGFAQVPLEMKNKWQKSLGEYLQKRECLKGLVVLMDIRHPMKDLDQQMIFWAIESRIPVQVLLTKADKLKSGARKAELLKVRKLAETFGGDVQVDVYSSLKGLGVDQLRAKLDTWFAPALAHLLEDEEGSNSAE</sequence>
<keyword id="KW-0131">Cell cycle</keyword>
<keyword id="KW-0132">Cell division</keyword>
<keyword id="KW-0342">GTP-binding</keyword>
<keyword id="KW-0460">Magnesium</keyword>
<keyword id="KW-0479">Metal-binding</keyword>
<keyword id="KW-0547">Nucleotide-binding</keyword>
<keyword id="KW-0717">Septation</keyword>